<evidence type="ECO:0000250" key="1">
    <source>
        <dbReference type="UniProtKB" id="Q4WAZ9"/>
    </source>
</evidence>
<evidence type="ECO:0000255" key="2"/>
<evidence type="ECO:0000255" key="3">
    <source>
        <dbReference type="PROSITE-ProRule" id="PRU00258"/>
    </source>
</evidence>
<evidence type="ECO:0000255" key="4">
    <source>
        <dbReference type="PROSITE-ProRule" id="PRU01348"/>
    </source>
</evidence>
<evidence type="ECO:0000255" key="5">
    <source>
        <dbReference type="PROSITE-ProRule" id="PRU01363"/>
    </source>
</evidence>
<evidence type="ECO:0000256" key="6">
    <source>
        <dbReference type="SAM" id="MobiDB-lite"/>
    </source>
</evidence>
<evidence type="ECO:0000269" key="7">
    <source>
    </source>
</evidence>
<evidence type="ECO:0000269" key="8">
    <source>
    </source>
</evidence>
<evidence type="ECO:0000269" key="9">
    <source>
    </source>
</evidence>
<evidence type="ECO:0000303" key="10">
    <source>
    </source>
</evidence>
<evidence type="ECO:0000305" key="11"/>
<evidence type="ECO:0000305" key="12">
    <source>
    </source>
</evidence>
<evidence type="ECO:0000305" key="13">
    <source>
    </source>
</evidence>
<accession>A1CLY8</accession>
<comment type="function">
    <text evidence="7 8 9">Hybrid PKS-NRPS synthetase; part of the gene cluster that mediates the biosynthesis of the mycotoxins cytochalasins E and K (PubMed:21983160). The hybrid PKS-NRPS synthetase ccsA and the enoyl reductase ccsC are responsible for fusion of phenylalanine with an octaketide backbone and subsequent release of the stable tetramic acid precursor (PubMed:21983160, PubMed:27551732). The polyketide synthase module (PKS) of the PKS-NRPS ccsA is responsible for the synthesis of the octaketide backbone (PubMed:21983160). The downstream nonribosomal peptide synthetase (NRPS) amidates the carboxyl end of the octaketide with a phenylalanine (PubMed:21983160). A reductase-like domain (R) at the C-terminus catalyzes the reductive release of the polyketide-amino acid intermediate (PubMed:21983160). Because ccsA lacks a designated enoylreductase (ER) domain, the required activity is provided the enoyl reductase ccsC (PubMed:21983160, PubMed:27551732). Upon formation of the 11-membered carbocycle-fused perhydroisoindolone intermediate, a number of oxidative steps are required to afford the final cytochalasin E and K, including two hydroxylations at C17 and C18, one alcohol oxidation at C17, one epoxidation at C6 and C7 and two Baeyer-Villiger oxidations (PubMed:21983160). The oxidative modification at C17, C18 and the C6-C7 epoxidation are likely to be catalyzed by the two cytochrome P450 oxygenases ccsD and ccsG (PubMed:21983160). CcsD may be responsible for the epoxidation of the C6-C7 double bond (PubMed:21983160). CcsG may be responsible for the successive oxidative modifications at C17 and C18 (PubMed:21983160). The double Baeyer-Villiger oxidations of ketocytochalasin to precytochalasin and cytochalasin Z(16) are among the final steps leading to cytochalasin E and K and are catalyzed by ccsB (PubMed:21983160, PubMed:24838010). The first oxygen insertion step follows that of the classic BVMO mechanism, generating the ester precytochalasin (PubMed:24838010). Release of precytochalasin into an aqueous environment can generate the shunt product iso-precytochalasin through spontaneous isomerization (PubMed:24838010). Alternatively, precytochalasin can undergo further oxidation by ccsB to yield the in-line carbonate-containing cytochalasin Z(16) (PubMed:24838010). Cytochalasin Z(16) is a precursor to cytochalasin E and cytochalasin K, whereas iso-precytochalasin is a precursor to cytochalasin Z(17) and rosellichalasin (PubMed:21983160, PubMed:24838010). The hydrolyase ccsE may catalyze hydrolysis of epoxide bond in cytochalasin E to afford cytochalasin K (PubMed:21983160). The function of ccsF has not been assigned but it may play a role in post-PKS-NRPS biosynthetic step, resistance or transport of cytochalasins and related PKS-NRPS products (PubMed:21983160).</text>
</comment>
<comment type="pathway">
    <text evidence="7">Mycotoxin biosynthesis.</text>
</comment>
<comment type="domain">
    <text evidence="1 12">NRP synthetases are composed of discrete domains (adenylation (A), thiolation (T) or peptidyl carrier protein (PCP) and condensation (C) domains) which when grouped together are referred to as a single module. Each module is responsible for the recognition (via the A domain) and incorporation of a single amino acid into the growing peptide product. Thus, an NRP synthetase is generally composed of one or more modules and can terminate in a thioesterase domain (TE) that releases the newly synthesized peptide from the enzyme. Occasionally, epimerase (E) domains (responsible for l- to d- amino acid conversion) are present within the NRP synthetase (By similarity). CcsA contains also a polyketide synthase module (PKS) consisting of several catalytic domains including a ketoacyl synthase domain (KS), an acyl transferase domain (AT), a dehydratase domain (DH), a methyltransferase domain (MT), and a ketoreductase domain (KR). Instead of a thioesterase domain (TE), CcsA finishes with a reductase-like domain (R) for peptide release. CcsA has the following architecture: KS-AT-DH-KR-PCP-C-A-T-R (PubMed:21983160).</text>
</comment>
<comment type="disruption phenotype">
    <text evidence="7">Loss of cytochalasin E and cytochalasin K production.</text>
</comment>
<comment type="similarity">
    <text evidence="11">In the C-terminal section; belongs to the NRP synthetase family.</text>
</comment>
<dbReference type="EC" id="2.3.1.-" evidence="12 13"/>
<dbReference type="EC" id="6.3.2.-" evidence="12 13"/>
<dbReference type="EMBL" id="DS027057">
    <property type="protein sequence ID" value="EAW09117.1"/>
    <property type="molecule type" value="Genomic_DNA"/>
</dbReference>
<dbReference type="RefSeq" id="XP_001270543.1">
    <property type="nucleotide sequence ID" value="XM_001270542.1"/>
</dbReference>
<dbReference type="SMR" id="A1CLY8"/>
<dbReference type="STRING" id="344612.A1CLY8"/>
<dbReference type="EnsemblFungi" id="EAW09117">
    <property type="protein sequence ID" value="EAW09117"/>
    <property type="gene ID" value="ACLA_078660"/>
</dbReference>
<dbReference type="GeneID" id="4702673"/>
<dbReference type="KEGG" id="act:ACLA_078660"/>
<dbReference type="VEuPathDB" id="FungiDB:ACLA_078660"/>
<dbReference type="eggNOG" id="KOG1178">
    <property type="taxonomic scope" value="Eukaryota"/>
</dbReference>
<dbReference type="eggNOG" id="KOG1202">
    <property type="taxonomic scope" value="Eukaryota"/>
</dbReference>
<dbReference type="HOGENOM" id="CLU_000022_37_5_1"/>
<dbReference type="OMA" id="NEQMRFG"/>
<dbReference type="OrthoDB" id="329835at2759"/>
<dbReference type="Proteomes" id="UP000006701">
    <property type="component" value="Unassembled WGS sequence"/>
</dbReference>
<dbReference type="GO" id="GO:0004315">
    <property type="term" value="F:3-oxoacyl-[acyl-carrier-protein] synthase activity"/>
    <property type="evidence" value="ECO:0007669"/>
    <property type="project" value="InterPro"/>
</dbReference>
<dbReference type="GO" id="GO:0004312">
    <property type="term" value="F:fatty acid synthase activity"/>
    <property type="evidence" value="ECO:0007669"/>
    <property type="project" value="TreeGrafter"/>
</dbReference>
<dbReference type="GO" id="GO:0016853">
    <property type="term" value="F:isomerase activity"/>
    <property type="evidence" value="ECO:0007669"/>
    <property type="project" value="UniProtKB-KW"/>
</dbReference>
<dbReference type="GO" id="GO:0016874">
    <property type="term" value="F:ligase activity"/>
    <property type="evidence" value="ECO:0007669"/>
    <property type="project" value="UniProtKB-KW"/>
</dbReference>
<dbReference type="GO" id="GO:0008168">
    <property type="term" value="F:methyltransferase activity"/>
    <property type="evidence" value="ECO:0007669"/>
    <property type="project" value="UniProtKB-KW"/>
</dbReference>
<dbReference type="GO" id="GO:0016491">
    <property type="term" value="F:oxidoreductase activity"/>
    <property type="evidence" value="ECO:0007669"/>
    <property type="project" value="UniProtKB-KW"/>
</dbReference>
<dbReference type="GO" id="GO:0031177">
    <property type="term" value="F:phosphopantetheine binding"/>
    <property type="evidence" value="ECO:0007669"/>
    <property type="project" value="InterPro"/>
</dbReference>
<dbReference type="GO" id="GO:0006633">
    <property type="term" value="P:fatty acid biosynthetic process"/>
    <property type="evidence" value="ECO:0007669"/>
    <property type="project" value="InterPro"/>
</dbReference>
<dbReference type="GO" id="GO:0032259">
    <property type="term" value="P:methylation"/>
    <property type="evidence" value="ECO:0007669"/>
    <property type="project" value="UniProtKB-KW"/>
</dbReference>
<dbReference type="GO" id="GO:0009403">
    <property type="term" value="P:toxin biosynthetic process"/>
    <property type="evidence" value="ECO:0007669"/>
    <property type="project" value="UniProtKB-ARBA"/>
</dbReference>
<dbReference type="CDD" id="cd05930">
    <property type="entry name" value="A_NRPS"/>
    <property type="match status" value="1"/>
</dbReference>
<dbReference type="CDD" id="cd02440">
    <property type="entry name" value="AdoMet_MTases"/>
    <property type="match status" value="1"/>
</dbReference>
<dbReference type="CDD" id="cd19532">
    <property type="entry name" value="C_PKS-NRPS"/>
    <property type="match status" value="1"/>
</dbReference>
<dbReference type="CDD" id="cd00833">
    <property type="entry name" value="PKS"/>
    <property type="match status" value="1"/>
</dbReference>
<dbReference type="FunFam" id="3.40.47.10:FF:000019">
    <property type="entry name" value="Polyketide synthase type I"/>
    <property type="match status" value="1"/>
</dbReference>
<dbReference type="Gene3D" id="3.30.300.30">
    <property type="match status" value="1"/>
</dbReference>
<dbReference type="Gene3D" id="3.40.47.10">
    <property type="match status" value="1"/>
</dbReference>
<dbReference type="Gene3D" id="1.10.1200.10">
    <property type="entry name" value="ACP-like"/>
    <property type="match status" value="1"/>
</dbReference>
<dbReference type="Gene3D" id="3.30.559.10">
    <property type="entry name" value="Chloramphenicol acetyltransferase-like domain"/>
    <property type="match status" value="1"/>
</dbReference>
<dbReference type="Gene3D" id="3.40.366.10">
    <property type="entry name" value="Malonyl-Coenzyme A Acyl Carrier Protein, domain 2"/>
    <property type="match status" value="1"/>
</dbReference>
<dbReference type="Gene3D" id="3.40.50.12780">
    <property type="entry name" value="N-terminal domain of ligase-like"/>
    <property type="match status" value="1"/>
</dbReference>
<dbReference type="Gene3D" id="3.40.50.720">
    <property type="entry name" value="NAD(P)-binding Rossmann-like Domain"/>
    <property type="match status" value="3"/>
</dbReference>
<dbReference type="Gene3D" id="3.30.559.30">
    <property type="entry name" value="Nonribosomal peptide synthetase, condensation domain"/>
    <property type="match status" value="1"/>
</dbReference>
<dbReference type="Gene3D" id="3.10.129.110">
    <property type="entry name" value="Polyketide synthase dehydratase"/>
    <property type="match status" value="1"/>
</dbReference>
<dbReference type="Gene3D" id="3.40.50.150">
    <property type="entry name" value="Vaccinia Virus protein VP39"/>
    <property type="match status" value="1"/>
</dbReference>
<dbReference type="InterPro" id="IPR001227">
    <property type="entry name" value="Ac_transferase_dom_sf"/>
</dbReference>
<dbReference type="InterPro" id="IPR036736">
    <property type="entry name" value="ACP-like_sf"/>
</dbReference>
<dbReference type="InterPro" id="IPR014043">
    <property type="entry name" value="Acyl_transferase_dom"/>
</dbReference>
<dbReference type="InterPro" id="IPR016035">
    <property type="entry name" value="Acyl_Trfase/lysoPLipase"/>
</dbReference>
<dbReference type="InterPro" id="IPR045851">
    <property type="entry name" value="AMP-bd_C_sf"/>
</dbReference>
<dbReference type="InterPro" id="IPR020845">
    <property type="entry name" value="AMP-binding_CS"/>
</dbReference>
<dbReference type="InterPro" id="IPR000873">
    <property type="entry name" value="AMP-dep_synth/lig_dom"/>
</dbReference>
<dbReference type="InterPro" id="IPR042099">
    <property type="entry name" value="ANL_N_sf"/>
</dbReference>
<dbReference type="InterPro" id="IPR023213">
    <property type="entry name" value="CAT-like_dom_sf"/>
</dbReference>
<dbReference type="InterPro" id="IPR001242">
    <property type="entry name" value="Condensatn"/>
</dbReference>
<dbReference type="InterPro" id="IPR013120">
    <property type="entry name" value="Far_NAD-bd"/>
</dbReference>
<dbReference type="InterPro" id="IPR018201">
    <property type="entry name" value="Ketoacyl_synth_AS"/>
</dbReference>
<dbReference type="InterPro" id="IPR014031">
    <property type="entry name" value="Ketoacyl_synth_C"/>
</dbReference>
<dbReference type="InterPro" id="IPR014030">
    <property type="entry name" value="Ketoacyl_synth_N"/>
</dbReference>
<dbReference type="InterPro" id="IPR016036">
    <property type="entry name" value="Malonyl_transacylase_ACP-bd"/>
</dbReference>
<dbReference type="InterPro" id="IPR013217">
    <property type="entry name" value="Methyltransf_12"/>
</dbReference>
<dbReference type="InterPro" id="IPR036291">
    <property type="entry name" value="NAD(P)-bd_dom_sf"/>
</dbReference>
<dbReference type="InterPro" id="IPR020841">
    <property type="entry name" value="PKS_Beta-ketoAc_synthase_dom"/>
</dbReference>
<dbReference type="InterPro" id="IPR042104">
    <property type="entry name" value="PKS_dehydratase_sf"/>
</dbReference>
<dbReference type="InterPro" id="IPR020807">
    <property type="entry name" value="PKS_DH"/>
</dbReference>
<dbReference type="InterPro" id="IPR049551">
    <property type="entry name" value="PKS_DH_C"/>
</dbReference>
<dbReference type="InterPro" id="IPR049552">
    <property type="entry name" value="PKS_DH_N"/>
</dbReference>
<dbReference type="InterPro" id="IPR013968">
    <property type="entry name" value="PKS_KR"/>
</dbReference>
<dbReference type="InterPro" id="IPR049900">
    <property type="entry name" value="PKS_mFAS_DH"/>
</dbReference>
<dbReference type="InterPro" id="IPR050091">
    <property type="entry name" value="PKS_NRPS_Biosynth_Enz"/>
</dbReference>
<dbReference type="InterPro" id="IPR020806">
    <property type="entry name" value="PKS_PP-bd"/>
</dbReference>
<dbReference type="InterPro" id="IPR009081">
    <property type="entry name" value="PP-bd_ACP"/>
</dbReference>
<dbReference type="InterPro" id="IPR006162">
    <property type="entry name" value="Ppantetheine_attach_site"/>
</dbReference>
<dbReference type="InterPro" id="IPR029063">
    <property type="entry name" value="SAM-dependent_MTases_sf"/>
</dbReference>
<dbReference type="InterPro" id="IPR016039">
    <property type="entry name" value="Thiolase-like"/>
</dbReference>
<dbReference type="PANTHER" id="PTHR43775">
    <property type="entry name" value="FATTY ACID SYNTHASE"/>
    <property type="match status" value="1"/>
</dbReference>
<dbReference type="PANTHER" id="PTHR43775:SF20">
    <property type="entry name" value="HYBRID PKS-NRPS SYNTHETASE APDA"/>
    <property type="match status" value="1"/>
</dbReference>
<dbReference type="Pfam" id="PF00698">
    <property type="entry name" value="Acyl_transf_1"/>
    <property type="match status" value="1"/>
</dbReference>
<dbReference type="Pfam" id="PF00501">
    <property type="entry name" value="AMP-binding"/>
    <property type="match status" value="1"/>
</dbReference>
<dbReference type="Pfam" id="PF00668">
    <property type="entry name" value="Condensation"/>
    <property type="match status" value="1"/>
</dbReference>
<dbReference type="Pfam" id="PF22621">
    <property type="entry name" value="CurL-like_PKS_C"/>
    <property type="match status" value="1"/>
</dbReference>
<dbReference type="Pfam" id="PF00109">
    <property type="entry name" value="ketoacyl-synt"/>
    <property type="match status" value="1"/>
</dbReference>
<dbReference type="Pfam" id="PF02801">
    <property type="entry name" value="Ketoacyl-synt_C"/>
    <property type="match status" value="1"/>
</dbReference>
<dbReference type="Pfam" id="PF08659">
    <property type="entry name" value="KR"/>
    <property type="match status" value="1"/>
</dbReference>
<dbReference type="Pfam" id="PF08242">
    <property type="entry name" value="Methyltransf_12"/>
    <property type="match status" value="1"/>
</dbReference>
<dbReference type="Pfam" id="PF07993">
    <property type="entry name" value="NAD_binding_4"/>
    <property type="match status" value="1"/>
</dbReference>
<dbReference type="Pfam" id="PF21089">
    <property type="entry name" value="PKS_DH_N"/>
    <property type="match status" value="1"/>
</dbReference>
<dbReference type="Pfam" id="PF00550">
    <property type="entry name" value="PP-binding"/>
    <property type="match status" value="1"/>
</dbReference>
<dbReference type="Pfam" id="PF14765">
    <property type="entry name" value="PS-DH"/>
    <property type="match status" value="1"/>
</dbReference>
<dbReference type="SMART" id="SM00827">
    <property type="entry name" value="PKS_AT"/>
    <property type="match status" value="1"/>
</dbReference>
<dbReference type="SMART" id="SM00826">
    <property type="entry name" value="PKS_DH"/>
    <property type="match status" value="1"/>
</dbReference>
<dbReference type="SMART" id="SM00822">
    <property type="entry name" value="PKS_KR"/>
    <property type="match status" value="1"/>
</dbReference>
<dbReference type="SMART" id="SM00825">
    <property type="entry name" value="PKS_KS"/>
    <property type="match status" value="1"/>
</dbReference>
<dbReference type="SMART" id="SM00823">
    <property type="entry name" value="PKS_PP"/>
    <property type="match status" value="2"/>
</dbReference>
<dbReference type="SUPFAM" id="SSF56801">
    <property type="entry name" value="Acetyl-CoA synthetase-like"/>
    <property type="match status" value="1"/>
</dbReference>
<dbReference type="SUPFAM" id="SSF47336">
    <property type="entry name" value="ACP-like"/>
    <property type="match status" value="2"/>
</dbReference>
<dbReference type="SUPFAM" id="SSF52777">
    <property type="entry name" value="CoA-dependent acyltransferases"/>
    <property type="match status" value="2"/>
</dbReference>
<dbReference type="SUPFAM" id="SSF52151">
    <property type="entry name" value="FabD/lysophospholipase-like"/>
    <property type="match status" value="1"/>
</dbReference>
<dbReference type="SUPFAM" id="SSF51735">
    <property type="entry name" value="NAD(P)-binding Rossmann-fold domains"/>
    <property type="match status" value="2"/>
</dbReference>
<dbReference type="SUPFAM" id="SSF55048">
    <property type="entry name" value="Probable ACP-binding domain of malonyl-CoA ACP transacylase"/>
    <property type="match status" value="1"/>
</dbReference>
<dbReference type="SUPFAM" id="SSF53335">
    <property type="entry name" value="S-adenosyl-L-methionine-dependent methyltransferases"/>
    <property type="match status" value="1"/>
</dbReference>
<dbReference type="SUPFAM" id="SSF53901">
    <property type="entry name" value="Thiolase-like"/>
    <property type="match status" value="1"/>
</dbReference>
<dbReference type="PROSITE" id="PS00455">
    <property type="entry name" value="AMP_BINDING"/>
    <property type="match status" value="1"/>
</dbReference>
<dbReference type="PROSITE" id="PS50075">
    <property type="entry name" value="CARRIER"/>
    <property type="match status" value="2"/>
</dbReference>
<dbReference type="PROSITE" id="PS00606">
    <property type="entry name" value="KS3_1"/>
    <property type="match status" value="1"/>
</dbReference>
<dbReference type="PROSITE" id="PS52004">
    <property type="entry name" value="KS3_2"/>
    <property type="match status" value="1"/>
</dbReference>
<dbReference type="PROSITE" id="PS00012">
    <property type="entry name" value="PHOSPHOPANTETHEINE"/>
    <property type="match status" value="1"/>
</dbReference>
<dbReference type="PROSITE" id="PS52019">
    <property type="entry name" value="PKS_MFAS_DH"/>
    <property type="match status" value="1"/>
</dbReference>
<protein>
    <recommendedName>
        <fullName evidence="10">Polyketide synthase-nonribosomal peptide synthetase</fullName>
        <shortName evidence="10">PKS-NRPS</shortName>
        <ecNumber evidence="12 13">2.3.1.-</ecNumber>
        <ecNumber evidence="12 13">6.3.2.-</ecNumber>
    </recommendedName>
    <alternativeName>
        <fullName evidence="10">Cytochalasin biosynthesis protein A</fullName>
    </alternativeName>
</protein>
<proteinExistence type="inferred from homology"/>
<keyword id="KW-0012">Acyltransferase</keyword>
<keyword id="KW-0413">Isomerase</keyword>
<keyword id="KW-0436">Ligase</keyword>
<keyword id="KW-0489">Methyltransferase</keyword>
<keyword id="KW-0511">Multifunctional enzyme</keyword>
<keyword id="KW-0521">NADP</keyword>
<keyword id="KW-0560">Oxidoreductase</keyword>
<keyword id="KW-0596">Phosphopantetheine</keyword>
<keyword id="KW-0597">Phosphoprotein</keyword>
<keyword id="KW-1185">Reference proteome</keyword>
<keyword id="KW-0677">Repeat</keyword>
<keyword id="KW-0949">S-adenosyl-L-methionine</keyword>
<keyword id="KW-0808">Transferase</keyword>
<reference key="1">
    <citation type="journal article" date="2008" name="PLoS Genet.">
        <title>Genomic islands in the pathogenic filamentous fungus Aspergillus fumigatus.</title>
        <authorList>
            <person name="Fedorova N.D."/>
            <person name="Khaldi N."/>
            <person name="Joardar V.S."/>
            <person name="Maiti R."/>
            <person name="Amedeo P."/>
            <person name="Anderson M.J."/>
            <person name="Crabtree J."/>
            <person name="Silva J.C."/>
            <person name="Badger J.H."/>
            <person name="Albarraq A."/>
            <person name="Angiuoli S."/>
            <person name="Bussey H."/>
            <person name="Bowyer P."/>
            <person name="Cotty P.J."/>
            <person name="Dyer P.S."/>
            <person name="Egan A."/>
            <person name="Galens K."/>
            <person name="Fraser-Liggett C.M."/>
            <person name="Haas B.J."/>
            <person name="Inman J.M."/>
            <person name="Kent R."/>
            <person name="Lemieux S."/>
            <person name="Malavazi I."/>
            <person name="Orvis J."/>
            <person name="Roemer T."/>
            <person name="Ronning C.M."/>
            <person name="Sundaram J.P."/>
            <person name="Sutton G."/>
            <person name="Turner G."/>
            <person name="Venter J.C."/>
            <person name="White O.R."/>
            <person name="Whitty B.R."/>
            <person name="Youngman P."/>
            <person name="Wolfe K.H."/>
            <person name="Goldman G.H."/>
            <person name="Wortman J.R."/>
            <person name="Jiang B."/>
            <person name="Denning D.W."/>
            <person name="Nierman W.C."/>
        </authorList>
    </citation>
    <scope>NUCLEOTIDE SEQUENCE [LARGE SCALE GENOMIC DNA]</scope>
    <source>
        <strain>ATCC 1007 / CBS 513.65 / DSM 816 / NCTC 3887 / NRRL 1 / QM 1276 / 107</strain>
    </source>
</reference>
<reference key="2">
    <citation type="journal article" date="2011" name="Metab. Eng.">
        <title>Identification and engineering of the cytochalasin gene cluster from Aspergillus clavatus NRRL 1.</title>
        <authorList>
            <person name="Qiao K."/>
            <person name="Chooi Y.H."/>
            <person name="Tang Y."/>
        </authorList>
    </citation>
    <scope>FUNCTION</scope>
    <scope>DOMAIN</scope>
    <scope>DISRUPTION PHENOTYPE</scope>
    <scope>PATHWAY</scope>
    <source>
        <strain>ATCC 1007 / CBS 513.65 / DSM 816 / NCTC 3887 / NRRL 1</strain>
    </source>
</reference>
<reference key="3">
    <citation type="journal article" date="2014" name="Nat. Chem. Biol.">
        <title>A carbonate-forming Baeyer-Villiger monooxygenase.</title>
        <authorList>
            <person name="Hu Y."/>
            <person name="Dietrich D."/>
            <person name="Xu W."/>
            <person name="Patel A."/>
            <person name="Thuss J.A."/>
            <person name="Wang J."/>
            <person name="Yin W.B."/>
            <person name="Qiao K."/>
            <person name="Houk K.N."/>
            <person name="Vederas J.C."/>
            <person name="Tang Y."/>
        </authorList>
    </citation>
    <scope>FUNCTION</scope>
    <source>
        <strain>ATCC 1007 / CBS 513.65 / DSM 816 / NCTC 3887 / NRRL 1</strain>
    </source>
</reference>
<reference key="4">
    <citation type="journal article" date="2016" name="PLoS ONE">
        <title>Linker flexibility facilitates module exchange in fungal hybrid PKS-NRPS engineering.</title>
        <authorList>
            <person name="Nielsen M.L."/>
            <person name="Isbrandt T."/>
            <person name="Petersen L.M."/>
            <person name="Mortensen U.H."/>
            <person name="Andersen M.R."/>
            <person name="Hoof J.B."/>
            <person name="Larsen T.O."/>
        </authorList>
    </citation>
    <scope>FUNCTION</scope>
</reference>
<organism>
    <name type="scientific">Aspergillus clavatus (strain ATCC 1007 / CBS 513.65 / DSM 816 / NCTC 3887 / NRRL 1 / QM 1276 / 107)</name>
    <dbReference type="NCBI Taxonomy" id="344612"/>
    <lineage>
        <taxon>Eukaryota</taxon>
        <taxon>Fungi</taxon>
        <taxon>Dikarya</taxon>
        <taxon>Ascomycota</taxon>
        <taxon>Pezizomycotina</taxon>
        <taxon>Eurotiomycetes</taxon>
        <taxon>Eurotiomycetidae</taxon>
        <taxon>Eurotiales</taxon>
        <taxon>Aspergillaceae</taxon>
        <taxon>Aspergillus</taxon>
        <taxon>Aspergillus subgen. Fumigati</taxon>
    </lineage>
</organism>
<sequence length="4043" mass="445741">MGSFQNSSEPIAIIGTGCRFPGGCDSPSKLWELLRAPRDLLKEIPESRFSVDSFYHPDNAHHGTSNVRHSYFLEEDLRQFDVQFFGIKPIEANAVDPQQRLLLETVYEGLESAGLSIQRLQGSDTAVYVGVMSADFTDLVGRDTETFPTYFATGTARSILSNRLSYFFDWHGPSLTIDTACSSSLIAMHHAVQTLRSGDSSLAIVAGSNLILGPEQYIAESKLQMLSPTGRSRMWDAAADGYARGEGVAAIVLKRLSQAIADGDHIECVIRETGVNQDGKTPGITMPSATAQAALIRSTYAKAGLDLSNRSDRPQYFEAHGTGTPAGDPIEARAIQTAFFGPDLNFTADSRKDTLFVGSIKTVVGHTEGTAGLAAVIKASLALQSGTIPPNRLLEQLNPAIKPFYNSLKILAAAEDWPQLSRGGVRRVSVNSFGFGGANSHAILESYEPSLHSHKGTRDISFSPFTFSAASETALVASLRAYRDLLSTRSDVRLTDLAWTLNSRRSTLASRVAIAASDKDDLVLKLDDRAENYDGSDTFMDAGHRKPNANELRILGVFTGQGAQWARMGAELIEQCPGASKVVDALEQSLRSLPPQDRPTWSLREQLLAPPSSSMVSTASISQPLCTAIQIMLVDMLREAGIQFSAVVGHSSGEIGAAYAAGCLSAKDAIRVAYYRGVHLKSALQKGSMLAVGTTFEDAQDLCNLPTFEDRLCVAASNSPSSVTISGDSDAIEEIKVVFDEEKKFTRLLKVDRAYHSHHMQDCVEPYVRSLRQCSVTFRPPNRNQCVWISSVFVQDIHQLSEDGSDRYWGSNLARPVMFAEALQLLLSLEGSFDLAVEVGPHPALKGPASQTIQDALGYSIPYTGVLSRGNSDVEAFAAALGSIWTAFGDGAVDFSRLQKFTSGSAAQPQLLKGLPTYQWDHNRVFWHESRVSKAFRTRKDVPNELLGRQVLDGAPNQLRWRNILRPREIAWLEGHQVQGQMVFPCAGYVSACAEASMRLAVGQNVESIELEEFVVGQAIVFNDSNSEVETLATLTEVVHRQQTISANFAFYSCPTGGESLELVRNASCRLRITVGDSAVDLLQPQAEADFALLEVESDRFYNALGQLGFGYTGPFRSLTALKRKLGIARGLIENAPPSFNHSQPLLIHPATLDAAIQSIMLAYCYPGDSMLRAIHLPTGIEKLTLNPVNCLKFAGQSVQVPFDSSASTGSGRSLQGDVSIYSLDGSRAVQLEGLQTQPLSSPTEASDLNIFTELVWGVDRPDCEEILRTTVVEDFDAELLFSLERVAYFYLRSLGEAVPERERNGLEWHHKRLFAYVDHVLSRVARGVNRFARPEWAADSKNDILKILQKYPDNIDLRLMRAVGENLPAVVRGQLTMLEPMIQDNMLNDFYVIAHGMPRYTKYLAAMASQISHRYPHMNVLEIGAGTGGATKSFLKELGEGFSTYTFTDISSGFFEKASQVFASYSAKMNFKVLDIEKDIESQGFAPESFDLIIASLVLHATRDLAQTVRNVRRLLKPGGYLLLLEITENEQMRFGLIFGGLPGWWLGYEDGRPFSPCVDIEEWSRVLEQNGFSGIETAIPHHDTLPAPLSVIVSQAVNEKVQFLHNPLDSIRGSTVIPRLTIIGGGGRRSAQLIDAVSSLVQPQCGQLRVVDSLQKICSEVLPVGGSVLSLTDFDEPVFKSMDADKLRGFQEIFKQSKNVLWVTQGSRSGDPYARMVVGFGRTIVLEMLHLRLQFLDVSPSSSPDASAIAEAMLRLEVSGSWEDEGAEDGAVLHSVEPELSISDGRCWVPRFKPNKEQNERYNSVRRSIETEQSFSDTCVELVYRDNSLSLLEVTHSSSEPLAEPSTKYLELDVNYSVSKAVEVVPGCYLFLILGRDTDTGDRFIALSPKQSSRVRIPRALVLPQHTSHGTINENSLDAFFHEIVARSILRDVPYGSAAIALQPNSLLADALREAAQDKGVTLHLWSTQASDLESEWTYIHRKASKTEVQNAIPRNVTCFFDMGGDESIATKILACLPDHTQAKKEASITAHEAHLIPTVLPDIRSLLMDIGRAMRTRGKSSSPDLRIVDLTDIVKGQADSETSIINWLESSSRVPVAVEPIEARVQFRSDRTYWLVGLTGGLGLSLCEWMAQQGARYIVLSSRSPKVDGRWLAKMNRMGVTVEVVANDISNRDSVQRVYNKIRTELPPISGVAQGAMVLHDTMFLDLDMERMNKVLRPKVDGSTYLEEIFHDTELEFFVFFSSMAAVTGNPGQSAYAAANMFMASLANQRRQRGLNASAVHIGAIFGNGYVTRELTLVQQEFLRKVGNLWLSEHDFRRLFAEAVYAGRHHRGRSPELSTGLKILESDESESITWFNNPVFQHCIKQSGRVDLISETSTSAAPVKVRLAEASSSADIYDIISDAFVTKLKTSLQVEGDRPIVDLTADTLGIDSLVAVDIRSWFIKELQVEIPVLKILSGATVGEMVTQAQELLPKELTPNLDPNAEAKPSKPKNTVQPKQQTKKTIQLQNVAKAPQPALSQQVSSGVQNMIKTNPPKEAEAKQPRPEVKQAAPKDSQYPTALETPSKLQDPSRNIVVAKDLAAEEKHLTDQEPVPSNMSSSSWSEIDESEGKVETSSSSSSTSASQIITKTKPVEVKKSVPMAFGQSRFWFLRHYLEDPSSFNITVSIQLDGPLKIDHFARAVQVVGQRHEALRTRFVTDEAQGTTKQEVLALSNLTLEERTISTDEEAEGVYQELKGYAFDLEKGENIRIILLKRSNRSFTLIIAYHHINMDGVSLEVLLRDLQMAYDSKFLSPRILQYADFSEQQRRDYQSGKWAEDLAFWKKEFQTMPGPLPLLSMARTSTRSPLTAYKTHSAEFHIDPATLDTIQSTCQRMKVTPFHFHLAVFYTMLIRLVDVENLCIGISSANRSQQDTLQSVGLYLNLLPLNFTPQLDQTFTNVLHIVREKSVQAFAHSKVPFDVIVNELGAARSATHSPLFQVLVNYRAGVSERRSFCNCDSKVLTFEQGQTPYDLSLDVIDNPGGDCHVIMAGQSVLYGAEHVAVLRGVYQNLLVAFSRNPALRLNVPPLYDTDEVKHAIKLGHGPAYNYQWPATIPERIDEIVERYPTHVALIDGDGRKMSYTEMARRVNTLAVVLLRQDIGQGSKVGVFMEPGSSWICSLLAILRLDAIYIPLDSRMGLDRLSTIVRDCKPDLLLVDNTTLSNVALLGLSCPTLNVDVVSPGSDQQHVPNTAQPSSTAVIMYTSGSTGVPKGIVMQHHTFRNNIETSTEKWDFREGRETTLQQSSYSFDMSLSQTFLTLSNGGTLRIVPKKLRGDPKAIASLITAEGITFTETTPSEYISWLRYGDVDDLRKSKWRIAVSGGETITTNLTGLLRQLEKSDLRLIDCYGPTEITFCSHGREVQYDGEGDILSPAFRTWPNYSVYIVDSHMKPVPIGIPGEILIGGAGVVAGYVHSELDARGFARNNFMNTMFLENAWTRLHRTGDFGRLDQEGNLILGGRIAGDTQVKLRGIRIDLQEIESAILSSGDGKIVDAAVTVRESADSGSEYLMAFVTTLDAGDLSLERIRQELPLPQHMRPANIITLDQLPMTASNKVDRLALKSLPLPPGSHVADTGTDESPSMAKMRDVWATVIPQEVLAHFELGPASNFFQVGGDSMLLVRLQTEINKVFGTSISLFQLFDASSLTGMVSLIDHSESTSQRSEVDWETETTISPSLLQVPATKRFFAHPAVVVLTGATGFLGRAIVNRLLKDCSVQKIHCVAVRRDPSSLPDDFKSPKVVLHRGDLTLPQLGLTDRAATEIFAEADAVIHNGADVSFMKTYQSLKQANLEATKELVRLSAPHRLSFHYISSASVTRLAGQESFDQSSVSAFPPSAEDGYVASKWASERYLEKVSDQCGLPIWIHRPSSIVGEGAPDTDMMASLLGYSRTLRAIPQTDGWTGWLDFVSADRVAMQIADEVYEDYSWPGTVKYLYEAGDREIPLSDLRGVLERETGESFESIPLEEWVLRAEGQGLHPLLGEYLRRVSGIPLVLPRLVQQGSFF</sequence>
<name>CCSA_ASPCL</name>
<gene>
    <name evidence="10" type="primary">ccsA</name>
    <name type="ORF">ACLA_078660</name>
</gene>
<feature type="chain" id="PRO_0000431479" description="Polyketide synthase-nonribosomal peptide synthetase">
    <location>
        <begin position="1"/>
        <end position="4043"/>
    </location>
</feature>
<feature type="domain" description="Ketosynthase family 3 (KS3)" evidence="4 12">
    <location>
        <begin position="8"/>
        <end position="446"/>
    </location>
</feature>
<feature type="domain" description="PKS/mFAS DH" evidence="5">
    <location>
        <begin position="944"/>
        <end position="1246"/>
    </location>
</feature>
<feature type="domain" description="Carrier 1" evidence="3">
    <location>
        <begin position="2394"/>
        <end position="2475"/>
    </location>
</feature>
<feature type="domain" description="Carrier 2" evidence="3">
    <location>
        <begin position="3617"/>
        <end position="3697"/>
    </location>
</feature>
<feature type="region of interest" description="Acyl transferase" evidence="2 12">
    <location>
        <begin position="557"/>
        <end position="877"/>
    </location>
</feature>
<feature type="region of interest" description="N-terminal hotdog fold" evidence="5">
    <location>
        <begin position="944"/>
        <end position="1078"/>
    </location>
</feature>
<feature type="region of interest" description="Dehydratase (DH) domain" evidence="2 12">
    <location>
        <begin position="945"/>
        <end position="1243"/>
    </location>
</feature>
<feature type="region of interest" description="C-terminal hotdog fold" evidence="5">
    <location>
        <begin position="1093"/>
        <end position="1246"/>
    </location>
</feature>
<feature type="region of interest" description="Methyltransferase (MT) domain" evidence="2 12">
    <location>
        <begin position="1400"/>
        <end position="1585"/>
    </location>
</feature>
<feature type="region of interest" description="Ketoreductase (KR)domain" evidence="2 12">
    <location>
        <begin position="2115"/>
        <end position="2288"/>
    </location>
</feature>
<feature type="region of interest" description="Peptidyl carrier protein" evidence="2 12">
    <location>
        <begin position="2395"/>
        <end position="2472"/>
    </location>
</feature>
<feature type="region of interest" description="Disordered" evidence="6">
    <location>
        <begin position="2476"/>
        <end position="2575"/>
    </location>
</feature>
<feature type="region of interest" description="Disordered" evidence="6">
    <location>
        <begin position="2587"/>
        <end position="2630"/>
    </location>
</feature>
<feature type="region of interest" description="Condensation" evidence="2 12">
    <location>
        <begin position="2640"/>
        <end position="3069"/>
    </location>
</feature>
<feature type="region of interest" description="Adenylation" evidence="2 12">
    <location>
        <begin position="3102"/>
        <end position="3502"/>
    </location>
</feature>
<feature type="region of interest" description="Thiolation" evidence="2 12">
    <location>
        <begin position="3622"/>
        <end position="3694"/>
    </location>
</feature>
<feature type="region of interest" description="Reductase-like" evidence="2 12">
    <location>
        <begin position="3735"/>
        <end position="3954"/>
    </location>
</feature>
<feature type="compositionally biased region" description="Polar residues" evidence="6">
    <location>
        <begin position="2494"/>
        <end position="2512"/>
    </location>
</feature>
<feature type="compositionally biased region" description="Polar residues" evidence="6">
    <location>
        <begin position="2520"/>
        <end position="2534"/>
    </location>
</feature>
<feature type="compositionally biased region" description="Basic and acidic residues" evidence="6">
    <location>
        <begin position="2537"/>
        <end position="2550"/>
    </location>
</feature>
<feature type="compositionally biased region" description="Low complexity" evidence="6">
    <location>
        <begin position="2617"/>
        <end position="2627"/>
    </location>
</feature>
<feature type="active site" description="For beta-ketoacyl synthase activity" evidence="4">
    <location>
        <position position="181"/>
    </location>
</feature>
<feature type="active site" description="For beta-ketoacyl synthase activity" evidence="4">
    <location>
        <position position="320"/>
    </location>
</feature>
<feature type="active site" description="For beta-ketoacyl synthase activity" evidence="4">
    <location>
        <position position="366"/>
    </location>
</feature>
<feature type="active site" description="Proton acceptor; for dehydratase activity" evidence="5">
    <location>
        <position position="976"/>
    </location>
</feature>
<feature type="active site" description="Proton donor; for dehydratase activity" evidence="5">
    <location>
        <position position="1154"/>
    </location>
</feature>
<feature type="modified residue" description="O-(pantetheine 4'-phosphoryl)serine" evidence="3">
    <location>
        <position position="2435"/>
    </location>
</feature>
<feature type="modified residue" description="O-(pantetheine 4'-phosphoryl)serine" evidence="3">
    <location>
        <position position="3657"/>
    </location>
</feature>